<proteinExistence type="evidence at protein level"/>
<dbReference type="EMBL" id="L23635">
    <property type="protein sequence ID" value="AAA60371.1"/>
    <property type="molecule type" value="Genomic_DNA"/>
</dbReference>
<dbReference type="EMBL" id="U00039">
    <property type="protein sequence ID" value="AAB18483.1"/>
    <property type="molecule type" value="Genomic_DNA"/>
</dbReference>
<dbReference type="EMBL" id="U00096">
    <property type="protein sequence ID" value="AAC76532.1"/>
    <property type="molecule type" value="Genomic_DNA"/>
</dbReference>
<dbReference type="EMBL" id="AP009048">
    <property type="protein sequence ID" value="BAE77787.1"/>
    <property type="molecule type" value="Genomic_DNA"/>
</dbReference>
<dbReference type="PIR" id="S47727">
    <property type="entry name" value="S47727"/>
</dbReference>
<dbReference type="RefSeq" id="NP_417964.1">
    <property type="nucleotide sequence ID" value="NC_000913.3"/>
</dbReference>
<dbReference type="RefSeq" id="WP_000478619.1">
    <property type="nucleotide sequence ID" value="NZ_SSZK01000042.1"/>
</dbReference>
<dbReference type="SMR" id="P37195"/>
<dbReference type="BioGRID" id="4261143">
    <property type="interactions" value="65"/>
</dbReference>
<dbReference type="BioGRID" id="852329">
    <property type="interactions" value="1"/>
</dbReference>
<dbReference type="DIP" id="DIP-12362N"/>
<dbReference type="FunCoup" id="P37195">
    <property type="interactions" value="19"/>
</dbReference>
<dbReference type="IntAct" id="P37195">
    <property type="interactions" value="10"/>
</dbReference>
<dbReference type="STRING" id="511145.b3507"/>
<dbReference type="jPOST" id="P37195"/>
<dbReference type="PaxDb" id="511145-b3507"/>
<dbReference type="EnsemblBacteria" id="AAC76532">
    <property type="protein sequence ID" value="AAC76532"/>
    <property type="gene ID" value="b3507"/>
</dbReference>
<dbReference type="GeneID" id="948021"/>
<dbReference type="KEGG" id="ecj:JW3475"/>
<dbReference type="KEGG" id="eco:b3507"/>
<dbReference type="KEGG" id="ecoc:C3026_19000"/>
<dbReference type="PATRIC" id="fig|1411691.4.peg.3212"/>
<dbReference type="EchoBASE" id="EB1835"/>
<dbReference type="eggNOG" id="COG2197">
    <property type="taxonomic scope" value="Bacteria"/>
</dbReference>
<dbReference type="HOGENOM" id="CLU_1522929_0_0_6"/>
<dbReference type="InParanoid" id="P37195"/>
<dbReference type="OMA" id="VHIQNEK"/>
<dbReference type="OrthoDB" id="6571527at2"/>
<dbReference type="BioCyc" id="EcoCyc:EG11889-MONOMER"/>
<dbReference type="PHI-base" id="PHI:11605"/>
<dbReference type="PRO" id="PR:P37195"/>
<dbReference type="Proteomes" id="UP000000625">
    <property type="component" value="Chromosome"/>
</dbReference>
<dbReference type="GO" id="GO:0003677">
    <property type="term" value="F:DNA binding"/>
    <property type="evidence" value="ECO:0007669"/>
    <property type="project" value="UniProtKB-KW"/>
</dbReference>
<dbReference type="GO" id="GO:1990451">
    <property type="term" value="P:cellular stress response to acidic pH"/>
    <property type="evidence" value="ECO:0000315"/>
    <property type="project" value="EcoCyc"/>
</dbReference>
<dbReference type="GO" id="GO:0006355">
    <property type="term" value="P:regulation of DNA-templated transcription"/>
    <property type="evidence" value="ECO:0007669"/>
    <property type="project" value="InterPro"/>
</dbReference>
<dbReference type="CDD" id="cd06170">
    <property type="entry name" value="LuxR_C_like"/>
    <property type="match status" value="1"/>
</dbReference>
<dbReference type="Gene3D" id="1.10.10.10">
    <property type="entry name" value="Winged helix-like DNA-binding domain superfamily/Winged helix DNA-binding domain"/>
    <property type="match status" value="1"/>
</dbReference>
<dbReference type="InterPro" id="IPR016032">
    <property type="entry name" value="Sig_transdc_resp-reg_C-effctor"/>
</dbReference>
<dbReference type="InterPro" id="IPR000792">
    <property type="entry name" value="Tscrpt_reg_LuxR_C"/>
</dbReference>
<dbReference type="InterPro" id="IPR036388">
    <property type="entry name" value="WH-like_DNA-bd_sf"/>
</dbReference>
<dbReference type="Pfam" id="PF00196">
    <property type="entry name" value="GerE"/>
    <property type="match status" value="1"/>
</dbReference>
<dbReference type="SMART" id="SM00421">
    <property type="entry name" value="HTH_LUXR"/>
    <property type="match status" value="1"/>
</dbReference>
<dbReference type="SUPFAM" id="SSF46894">
    <property type="entry name" value="C-terminal effector domain of the bipartite response regulators"/>
    <property type="match status" value="1"/>
</dbReference>
<dbReference type="PROSITE" id="PS50043">
    <property type="entry name" value="HTH_LUXR_2"/>
    <property type="match status" value="1"/>
</dbReference>
<keyword id="KW-0238">DNA-binding</keyword>
<keyword id="KW-1185">Reference proteome</keyword>
<keyword id="KW-0804">Transcription</keyword>
<keyword id="KW-0805">Transcription regulation</keyword>
<protein>
    <recommendedName>
        <fullName>HTH-type transcriptional regulator DctR</fullName>
    </recommendedName>
</protein>
<gene>
    <name type="primary">dctR</name>
    <name type="synonym">yhiF</name>
    <name type="ordered locus">b3507</name>
    <name type="ordered locus">JW3475</name>
</gene>
<accession>P37195</accession>
<accession>Q2M7G9</accession>
<name>DCTR_ECOLI</name>
<reference key="1">
    <citation type="journal article" date="1994" name="Mol. Microbiol.">
        <title>Characterization of the carbon starvation-inducible and stationary phase-inducible gene slp encoding an outer membrane lipoprotein in Escherichia coli.</title>
        <authorList>
            <person name="Alexander D.M."/>
            <person name="St John A.C."/>
        </authorList>
    </citation>
    <scope>NUCLEOTIDE SEQUENCE [GENOMIC DNA]</scope>
    <source>
        <strain>K12</strain>
    </source>
</reference>
<reference key="2">
    <citation type="journal article" date="1994" name="Nucleic Acids Res.">
        <title>Analysis of the Escherichia coli genome. V. DNA sequence of the region from 76.0 to 81.5 minutes.</title>
        <authorList>
            <person name="Sofia H.J."/>
            <person name="Burland V."/>
            <person name="Daniels D.L."/>
            <person name="Plunkett G. III"/>
            <person name="Blattner F.R."/>
        </authorList>
    </citation>
    <scope>NUCLEOTIDE SEQUENCE [LARGE SCALE GENOMIC DNA]</scope>
    <source>
        <strain>K12 / MG1655 / ATCC 47076</strain>
    </source>
</reference>
<reference key="3">
    <citation type="journal article" date="1997" name="Science">
        <title>The complete genome sequence of Escherichia coli K-12.</title>
        <authorList>
            <person name="Blattner F.R."/>
            <person name="Plunkett G. III"/>
            <person name="Bloch C.A."/>
            <person name="Perna N.T."/>
            <person name="Burland V."/>
            <person name="Riley M."/>
            <person name="Collado-Vides J."/>
            <person name="Glasner J.D."/>
            <person name="Rode C.K."/>
            <person name="Mayhew G.F."/>
            <person name="Gregor J."/>
            <person name="Davis N.W."/>
            <person name="Kirkpatrick H.A."/>
            <person name="Goeden M.A."/>
            <person name="Rose D.J."/>
            <person name="Mau B."/>
            <person name="Shao Y."/>
        </authorList>
    </citation>
    <scope>NUCLEOTIDE SEQUENCE [LARGE SCALE GENOMIC DNA]</scope>
    <source>
        <strain>K12 / MG1655 / ATCC 47076</strain>
    </source>
</reference>
<reference key="4">
    <citation type="journal article" date="2006" name="Mol. Syst. Biol.">
        <title>Highly accurate genome sequences of Escherichia coli K-12 strains MG1655 and W3110.</title>
        <authorList>
            <person name="Hayashi K."/>
            <person name="Morooka N."/>
            <person name="Yamamoto Y."/>
            <person name="Fujita K."/>
            <person name="Isono K."/>
            <person name="Choi S."/>
            <person name="Ohtsubo E."/>
            <person name="Baba T."/>
            <person name="Wanner B.L."/>
            <person name="Mori H."/>
            <person name="Horiuchi T."/>
        </authorList>
    </citation>
    <scope>NUCLEOTIDE SEQUENCE [LARGE SCALE GENOMIC DNA]</scope>
    <source>
        <strain>K12 / W3110 / ATCC 27325 / DSM 5911</strain>
    </source>
</reference>
<reference key="5">
    <citation type="journal article" date="1998" name="J. Bacteriol.">
        <title>atp mutants of Escherichia coli fail to grow on succinate due to a transport deficiency.</title>
        <authorList>
            <person name="Boogerd F.C."/>
            <person name="Boe L."/>
            <person name="Michelsen O."/>
            <person name="Jensen P.R."/>
        </authorList>
    </citation>
    <scope>FUNCTION</scope>
    <scope>GENE NAME</scope>
    <source>
        <strain>K12</strain>
    </source>
</reference>
<reference key="6">
    <citation type="journal article" date="2002" name="J. Bacteriol.">
        <title>Escherichia coli gene expression responsive to levels of the response regulator EvgA.</title>
        <authorList>
            <person name="Masuda N."/>
            <person name="Church G.M."/>
        </authorList>
    </citation>
    <scope>INDUCTION</scope>
    <source>
        <strain>K12 / MG1655 / ATCC 47076</strain>
    </source>
</reference>
<reference key="7">
    <citation type="journal article" date="2003" name="FEMS Microbiol. Lett.">
        <title>Systematic characterization of Escherichia coli genes/ORFs affecting biofilm formation.</title>
        <authorList>
            <person name="Tenorio E."/>
            <person name="Saeki T."/>
            <person name="Fujita K."/>
            <person name="Kitakawa M."/>
            <person name="Baba T."/>
            <person name="Mori H."/>
            <person name="Isono K."/>
        </authorList>
    </citation>
    <scope>INVOLVEMENT IN BIOFILM FORMATION</scope>
</reference>
<reference key="8">
    <citation type="journal article" date="2003" name="Mol. Microbiol.">
        <title>Regulatory network of acid resistance genes in Escherichia coli.</title>
        <authorList>
            <person name="Masuda N."/>
            <person name="Church G.M."/>
        </authorList>
    </citation>
    <scope>INDUCTION</scope>
    <source>
        <strain>K12 / MG1655 / ATCC 47076</strain>
    </source>
</reference>
<organism>
    <name type="scientific">Escherichia coli (strain K12)</name>
    <dbReference type="NCBI Taxonomy" id="83333"/>
    <lineage>
        <taxon>Bacteria</taxon>
        <taxon>Pseudomonadati</taxon>
        <taxon>Pseudomonadota</taxon>
        <taxon>Gammaproteobacteria</taxon>
        <taxon>Enterobacterales</taxon>
        <taxon>Enterobacteriaceae</taxon>
        <taxon>Escherichia</taxon>
    </lineage>
</organism>
<evidence type="ECO:0000255" key="1">
    <source>
        <dbReference type="PROSITE-ProRule" id="PRU00411"/>
    </source>
</evidence>
<evidence type="ECO:0000269" key="2">
    <source>
    </source>
</evidence>
<evidence type="ECO:0000269" key="3">
    <source>
    </source>
</evidence>
<evidence type="ECO:0000269" key="4">
    <source>
    </source>
</evidence>
<evidence type="ECO:0000305" key="5"/>
<comment type="function">
    <text evidence="4">May act as a transcriptional regulator of dctA.</text>
</comment>
<comment type="interaction">
    <interactant intactId="EBI-562540">
        <id>P37195</id>
    </interactant>
    <interactant intactId="EBI-369670">
        <id>P0DMC7</id>
        <label>rcsB</label>
    </interactant>
    <organismsDiffer>false</organismsDiffer>
    <experiments>3</experiments>
</comment>
<comment type="induction">
    <text evidence="2 3">By acidic conditions. Could be induced by EvgA via the induction of YdeO.</text>
</comment>
<comment type="miscellaneous">
    <text>Overexpression causes filamentous biofilm formation.</text>
</comment>
<feature type="chain" id="PRO_0000184145" description="HTH-type transcriptional regulator DctR">
    <location>
        <begin position="1"/>
        <end position="176"/>
    </location>
</feature>
<feature type="domain" description="HTH luxR-type" evidence="1">
    <location>
        <begin position="109"/>
        <end position="174"/>
    </location>
</feature>
<feature type="DNA-binding region" description="H-T-H motif" evidence="1">
    <location>
        <begin position="133"/>
        <end position="152"/>
    </location>
</feature>
<feature type="sequence conflict" description="In Ref. 1; AAA60371." evidence="5" ref="1">
    <original>INELVRHQHIDYLV</original>
    <variation>DQ</variation>
    <location>
        <begin position="163"/>
        <end position="176"/>
    </location>
</feature>
<sequence>MFLIITRDTMFFTAMKNILSKGNVVHIQNEEEIDVMLHQNAFVIIDTLMNNVFHSNFLTQIERLKPVHVIIFSPFNIKRCLGKVPVTFVPRTITIIDFVALINGSYCSVPEAAVSLSRKQHQVLSCIANQMTTEDILEKLKISLKTFYCHKHNIMMILNLKRINELVRHQHIDYLV</sequence>